<comment type="function">
    <text evidence="1">Binds directly to 23S rRNA. The L1 stalk is quite mobile in the ribosome, and is involved in E site tRNA release.</text>
</comment>
<comment type="function">
    <text evidence="1">Protein L1 is also a translational repressor protein, it controls the translation of the L11 operon by binding to its mRNA.</text>
</comment>
<comment type="subunit">
    <text evidence="1">Part of the 50S ribosomal subunit.</text>
</comment>
<comment type="similarity">
    <text evidence="1">Belongs to the universal ribosomal protein uL1 family.</text>
</comment>
<proteinExistence type="inferred from homology"/>
<reference key="1">
    <citation type="journal article" date="2005" name="PLoS Genet.">
        <title>Life in hot carbon monoxide: the complete genome sequence of Carboxydothermus hydrogenoformans Z-2901.</title>
        <authorList>
            <person name="Wu M."/>
            <person name="Ren Q."/>
            <person name="Durkin A.S."/>
            <person name="Daugherty S.C."/>
            <person name="Brinkac L.M."/>
            <person name="Dodson R.J."/>
            <person name="Madupu R."/>
            <person name="Sullivan S.A."/>
            <person name="Kolonay J.F."/>
            <person name="Nelson W.C."/>
            <person name="Tallon L.J."/>
            <person name="Jones K.M."/>
            <person name="Ulrich L.E."/>
            <person name="Gonzalez J.M."/>
            <person name="Zhulin I.B."/>
            <person name="Robb F.T."/>
            <person name="Eisen J.A."/>
        </authorList>
    </citation>
    <scope>NUCLEOTIDE SEQUENCE [LARGE SCALE GENOMIC DNA]</scope>
    <source>
        <strain>ATCC BAA-161 / DSM 6008 / Z-2901</strain>
    </source>
</reference>
<feature type="chain" id="PRO_0000230598" description="Large ribosomal subunit protein uL1">
    <location>
        <begin position="1"/>
        <end position="231"/>
    </location>
</feature>
<protein>
    <recommendedName>
        <fullName evidence="1">Large ribosomal subunit protein uL1</fullName>
    </recommendedName>
    <alternativeName>
        <fullName evidence="2">50S ribosomal protein L1</fullName>
    </alternativeName>
</protein>
<gene>
    <name evidence="1" type="primary">rplA</name>
    <name type="ordered locus">CHY_2322</name>
</gene>
<organism>
    <name type="scientific">Carboxydothermus hydrogenoformans (strain ATCC BAA-161 / DSM 6008 / Z-2901)</name>
    <dbReference type="NCBI Taxonomy" id="246194"/>
    <lineage>
        <taxon>Bacteria</taxon>
        <taxon>Bacillati</taxon>
        <taxon>Bacillota</taxon>
        <taxon>Clostridia</taxon>
        <taxon>Thermoanaerobacterales</taxon>
        <taxon>Thermoanaerobacteraceae</taxon>
        <taxon>Carboxydothermus</taxon>
    </lineage>
</organism>
<keyword id="KW-1185">Reference proteome</keyword>
<keyword id="KW-0678">Repressor</keyword>
<keyword id="KW-0687">Ribonucleoprotein</keyword>
<keyword id="KW-0689">Ribosomal protein</keyword>
<keyword id="KW-0694">RNA-binding</keyword>
<keyword id="KW-0699">rRNA-binding</keyword>
<keyword id="KW-0810">Translation regulation</keyword>
<keyword id="KW-0820">tRNA-binding</keyword>
<sequence>MPKHGKKYLEAAKKVDKTKLYEPAEAFSLVKELSFAKFDETVEVAVKLGVDPRHADQQVRGAVVLPHGTGKTRKVLVFAKGEKAKEAEAAGADYVGAEEYIEKIAQGWIDFDVVVATPDMMGAVGRLGKILGPKGLMPSPKTGTVTFEVAKAIAEIKAGKIEYRVDKAGIVHVPIGKVSFPVEKLVENFNTLMDALIKAKPAGAKGQYLKGVTVSSTMGPGIKINHLKLVK</sequence>
<evidence type="ECO:0000255" key="1">
    <source>
        <dbReference type="HAMAP-Rule" id="MF_01318"/>
    </source>
</evidence>
<evidence type="ECO:0000305" key="2"/>
<accession>Q3A9Q3</accession>
<name>RL1_CARHZ</name>
<dbReference type="EMBL" id="CP000141">
    <property type="protein sequence ID" value="ABB14394.1"/>
    <property type="molecule type" value="Genomic_DNA"/>
</dbReference>
<dbReference type="RefSeq" id="WP_011345204.1">
    <property type="nucleotide sequence ID" value="NC_007503.1"/>
</dbReference>
<dbReference type="SMR" id="Q3A9Q3"/>
<dbReference type="FunCoup" id="Q3A9Q3">
    <property type="interactions" value="498"/>
</dbReference>
<dbReference type="STRING" id="246194.CHY_2322"/>
<dbReference type="KEGG" id="chy:CHY_2322"/>
<dbReference type="eggNOG" id="COG0081">
    <property type="taxonomic scope" value="Bacteria"/>
</dbReference>
<dbReference type="HOGENOM" id="CLU_062853_0_0_9"/>
<dbReference type="InParanoid" id="Q3A9Q3"/>
<dbReference type="OrthoDB" id="9803740at2"/>
<dbReference type="Proteomes" id="UP000002706">
    <property type="component" value="Chromosome"/>
</dbReference>
<dbReference type="GO" id="GO:0015934">
    <property type="term" value="C:large ribosomal subunit"/>
    <property type="evidence" value="ECO:0007669"/>
    <property type="project" value="InterPro"/>
</dbReference>
<dbReference type="GO" id="GO:0019843">
    <property type="term" value="F:rRNA binding"/>
    <property type="evidence" value="ECO:0007669"/>
    <property type="project" value="UniProtKB-UniRule"/>
</dbReference>
<dbReference type="GO" id="GO:0003735">
    <property type="term" value="F:structural constituent of ribosome"/>
    <property type="evidence" value="ECO:0007669"/>
    <property type="project" value="InterPro"/>
</dbReference>
<dbReference type="GO" id="GO:0000049">
    <property type="term" value="F:tRNA binding"/>
    <property type="evidence" value="ECO:0007669"/>
    <property type="project" value="UniProtKB-KW"/>
</dbReference>
<dbReference type="GO" id="GO:0006417">
    <property type="term" value="P:regulation of translation"/>
    <property type="evidence" value="ECO:0007669"/>
    <property type="project" value="UniProtKB-KW"/>
</dbReference>
<dbReference type="GO" id="GO:0006412">
    <property type="term" value="P:translation"/>
    <property type="evidence" value="ECO:0007669"/>
    <property type="project" value="UniProtKB-UniRule"/>
</dbReference>
<dbReference type="CDD" id="cd00403">
    <property type="entry name" value="Ribosomal_L1"/>
    <property type="match status" value="1"/>
</dbReference>
<dbReference type="FunFam" id="3.40.50.790:FF:000001">
    <property type="entry name" value="50S ribosomal protein L1"/>
    <property type="match status" value="1"/>
</dbReference>
<dbReference type="Gene3D" id="3.30.190.20">
    <property type="match status" value="1"/>
</dbReference>
<dbReference type="Gene3D" id="3.40.50.790">
    <property type="match status" value="1"/>
</dbReference>
<dbReference type="HAMAP" id="MF_01318_B">
    <property type="entry name" value="Ribosomal_uL1_B"/>
    <property type="match status" value="1"/>
</dbReference>
<dbReference type="InterPro" id="IPR005878">
    <property type="entry name" value="Ribosom_uL1_bac-type"/>
</dbReference>
<dbReference type="InterPro" id="IPR002143">
    <property type="entry name" value="Ribosomal_uL1"/>
</dbReference>
<dbReference type="InterPro" id="IPR023674">
    <property type="entry name" value="Ribosomal_uL1-like"/>
</dbReference>
<dbReference type="InterPro" id="IPR028364">
    <property type="entry name" value="Ribosomal_uL1/biogenesis"/>
</dbReference>
<dbReference type="InterPro" id="IPR016095">
    <property type="entry name" value="Ribosomal_uL1_3-a/b-sand"/>
</dbReference>
<dbReference type="InterPro" id="IPR023673">
    <property type="entry name" value="Ribosomal_uL1_CS"/>
</dbReference>
<dbReference type="NCBIfam" id="TIGR01169">
    <property type="entry name" value="rplA_bact"/>
    <property type="match status" value="1"/>
</dbReference>
<dbReference type="PANTHER" id="PTHR36427">
    <property type="entry name" value="54S RIBOSOMAL PROTEIN L1, MITOCHONDRIAL"/>
    <property type="match status" value="1"/>
</dbReference>
<dbReference type="PANTHER" id="PTHR36427:SF3">
    <property type="entry name" value="LARGE RIBOSOMAL SUBUNIT PROTEIN UL1M"/>
    <property type="match status" value="1"/>
</dbReference>
<dbReference type="Pfam" id="PF00687">
    <property type="entry name" value="Ribosomal_L1"/>
    <property type="match status" value="1"/>
</dbReference>
<dbReference type="PIRSF" id="PIRSF002155">
    <property type="entry name" value="Ribosomal_L1"/>
    <property type="match status" value="1"/>
</dbReference>
<dbReference type="SUPFAM" id="SSF56808">
    <property type="entry name" value="Ribosomal protein L1"/>
    <property type="match status" value="1"/>
</dbReference>
<dbReference type="PROSITE" id="PS01199">
    <property type="entry name" value="RIBOSOMAL_L1"/>
    <property type="match status" value="1"/>
</dbReference>